<gene>
    <name type="primary">BZW1</name>
    <name evidence="8" type="synonym">5MP2</name>
    <name type="synonym">BZAP45</name>
    <name type="synonym">KIAA0005</name>
</gene>
<accession>Q7L1Q6</accession>
<accession>B4DLZ8</accession>
<accession>B4DWF7</accession>
<accession>Q14281</accession>
<accession>Q15394</accession>
<accession>Q9BUY0</accession>
<keyword id="KW-0007">Acetylation</keyword>
<keyword id="KW-0010">Activator</keyword>
<keyword id="KW-0025">Alternative splicing</keyword>
<keyword id="KW-0903">Direct protein sequencing</keyword>
<keyword id="KW-1017">Isopeptide bond</keyword>
<keyword id="KW-0597">Phosphoprotein</keyword>
<keyword id="KW-1267">Proteomics identification</keyword>
<keyword id="KW-1185">Reference proteome</keyword>
<keyword id="KW-0804">Transcription</keyword>
<keyword id="KW-0805">Transcription regulation</keyword>
<keyword id="KW-0810">Translation regulation</keyword>
<keyword id="KW-0832">Ubl conjugation</keyword>
<dbReference type="EMBL" id="D13630">
    <property type="protein sequence ID" value="BAA02795.2"/>
    <property type="status" value="ALT_INIT"/>
    <property type="molecule type" value="mRNA"/>
</dbReference>
<dbReference type="EMBL" id="AK297227">
    <property type="protein sequence ID" value="BAG59710.1"/>
    <property type="molecule type" value="mRNA"/>
</dbReference>
<dbReference type="EMBL" id="AK301511">
    <property type="protein sequence ID" value="BAG63019.1"/>
    <property type="molecule type" value="mRNA"/>
</dbReference>
<dbReference type="EMBL" id="AC007163">
    <property type="protein sequence ID" value="AAX93286.1"/>
    <property type="molecule type" value="Genomic_DNA"/>
</dbReference>
<dbReference type="EMBL" id="BC001804">
    <property type="protein sequence ID" value="AAH01804.1"/>
    <property type="molecule type" value="mRNA"/>
</dbReference>
<dbReference type="EMBL" id="BC026303">
    <property type="protein sequence ID" value="AAH26303.1"/>
    <property type="molecule type" value="mRNA"/>
</dbReference>
<dbReference type="EMBL" id="Z70221">
    <property type="protein sequence ID" value="CAA94180.1"/>
    <property type="molecule type" value="mRNA"/>
</dbReference>
<dbReference type="CCDS" id="CCDS56154.1">
    <molecule id="Q7L1Q6-4"/>
</dbReference>
<dbReference type="CCDS" id="CCDS56155.1">
    <molecule id="Q7L1Q6-3"/>
</dbReference>
<dbReference type="CCDS" id="CCDS56156.1">
    <molecule id="Q7L1Q6-1"/>
</dbReference>
<dbReference type="RefSeq" id="NP_001193996.1">
    <molecule id="Q7L1Q6-1"/>
    <property type="nucleotide sequence ID" value="NM_001207067.2"/>
</dbReference>
<dbReference type="RefSeq" id="NP_001193997.1">
    <molecule id="Q7L1Q6-3"/>
    <property type="nucleotide sequence ID" value="NM_001207068.3"/>
</dbReference>
<dbReference type="RefSeq" id="NP_001193998.1">
    <molecule id="Q7L1Q6-4"/>
    <property type="nucleotide sequence ID" value="NM_001207069.2"/>
</dbReference>
<dbReference type="RefSeq" id="NP_001308617.1">
    <molecule id="Q7L1Q6-1"/>
    <property type="nucleotide sequence ID" value="NM_001321688.2"/>
</dbReference>
<dbReference type="RefSeq" id="NP_001308619.1">
    <molecule id="Q7L1Q6-1"/>
    <property type="nucleotide sequence ID" value="NM_001321690.1"/>
</dbReference>
<dbReference type="RefSeq" id="NP_001308620.1">
    <property type="nucleotide sequence ID" value="NM_001321691.1"/>
</dbReference>
<dbReference type="RefSeq" id="NP_001308622.1">
    <property type="nucleotide sequence ID" value="NM_001321693.1"/>
</dbReference>
<dbReference type="RefSeq" id="NP_001308623.1">
    <property type="nucleotide sequence ID" value="NM_001321694.1"/>
</dbReference>
<dbReference type="RefSeq" id="NP_055485.2">
    <molecule id="Q7L1Q6-2"/>
    <property type="nucleotide sequence ID" value="NM_014670.3"/>
</dbReference>
<dbReference type="SMR" id="Q7L1Q6"/>
<dbReference type="BioGRID" id="115042">
    <property type="interactions" value="189"/>
</dbReference>
<dbReference type="CORUM" id="Q7L1Q6"/>
<dbReference type="FunCoup" id="Q7L1Q6">
    <property type="interactions" value="2811"/>
</dbReference>
<dbReference type="IntAct" id="Q7L1Q6">
    <property type="interactions" value="49"/>
</dbReference>
<dbReference type="MINT" id="Q7L1Q6"/>
<dbReference type="STRING" id="9606.ENSP00000394316"/>
<dbReference type="GlyGen" id="Q7L1Q6">
    <property type="glycosylation" value="1 site, 1 O-linked glycan (1 site)"/>
</dbReference>
<dbReference type="iPTMnet" id="Q7L1Q6"/>
<dbReference type="MetOSite" id="Q7L1Q6"/>
<dbReference type="PhosphoSitePlus" id="Q7L1Q6"/>
<dbReference type="SwissPalm" id="Q7L1Q6"/>
<dbReference type="BioMuta" id="BZW1"/>
<dbReference type="DMDM" id="74738534"/>
<dbReference type="jPOST" id="Q7L1Q6"/>
<dbReference type="MassIVE" id="Q7L1Q6"/>
<dbReference type="PaxDb" id="9606-ENSP00000394316"/>
<dbReference type="PeptideAtlas" id="Q7L1Q6"/>
<dbReference type="ProteomicsDB" id="68744">
    <molecule id="Q7L1Q6-1"/>
</dbReference>
<dbReference type="ProteomicsDB" id="68745">
    <molecule id="Q7L1Q6-2"/>
</dbReference>
<dbReference type="ProteomicsDB" id="68746">
    <molecule id="Q7L1Q6-3"/>
</dbReference>
<dbReference type="ProteomicsDB" id="68747">
    <molecule id="Q7L1Q6-4"/>
</dbReference>
<dbReference type="Pumba" id="Q7L1Q6"/>
<dbReference type="TopDownProteomics" id="Q7L1Q6-1">
    <molecule id="Q7L1Q6-1"/>
</dbReference>
<dbReference type="TopDownProteomics" id="Q7L1Q6-2">
    <molecule id="Q7L1Q6-2"/>
</dbReference>
<dbReference type="Antibodypedia" id="47644">
    <property type="antibodies" value="85 antibodies from 19 providers"/>
</dbReference>
<dbReference type="DNASU" id="9689"/>
<dbReference type="Ensembl" id="ENST00000409226.5">
    <molecule id="Q7L1Q6-4"/>
    <property type="protein sequence ID" value="ENSP00000386837.1"/>
    <property type="gene ID" value="ENSG00000082153.18"/>
</dbReference>
<dbReference type="Ensembl" id="ENST00000409600.6">
    <molecule id="Q7L1Q6-1"/>
    <property type="protein sequence ID" value="ENSP00000386474.1"/>
    <property type="gene ID" value="ENSG00000082153.18"/>
</dbReference>
<dbReference type="Ensembl" id="ENST00000452790.6">
    <molecule id="Q7L1Q6-3"/>
    <property type="protein sequence ID" value="ENSP00000394316.2"/>
    <property type="gene ID" value="ENSG00000082153.18"/>
</dbReference>
<dbReference type="GeneID" id="9689"/>
<dbReference type="KEGG" id="hsa:9689"/>
<dbReference type="MANE-Select" id="ENST00000409600.6">
    <property type="protein sequence ID" value="ENSP00000386474.1"/>
    <property type="RefSeq nucleotide sequence ID" value="NM_001207067.2"/>
    <property type="RefSeq protein sequence ID" value="NP_001193996.1"/>
</dbReference>
<dbReference type="UCSC" id="uc002uwc.4">
    <molecule id="Q7L1Q6-1"/>
    <property type="organism name" value="human"/>
</dbReference>
<dbReference type="AGR" id="HGNC:18380"/>
<dbReference type="CTD" id="9689"/>
<dbReference type="DisGeNET" id="9689"/>
<dbReference type="GeneCards" id="BZW1"/>
<dbReference type="HGNC" id="HGNC:18380">
    <property type="gene designation" value="BZW1"/>
</dbReference>
<dbReference type="HPA" id="ENSG00000082153">
    <property type="expression patterns" value="Low tissue specificity"/>
</dbReference>
<dbReference type="MIM" id="619252">
    <property type="type" value="gene"/>
</dbReference>
<dbReference type="neXtProt" id="NX_Q7L1Q6"/>
<dbReference type="OpenTargets" id="ENSG00000082153"/>
<dbReference type="PharmGKB" id="PA38535"/>
<dbReference type="VEuPathDB" id="HostDB:ENSG00000082153"/>
<dbReference type="eggNOG" id="KOG2297">
    <property type="taxonomic scope" value="Eukaryota"/>
</dbReference>
<dbReference type="GeneTree" id="ENSGT00390000012561"/>
<dbReference type="HOGENOM" id="CLU_032849_0_1_1"/>
<dbReference type="InParanoid" id="Q7L1Q6"/>
<dbReference type="OrthoDB" id="1727522at2759"/>
<dbReference type="PAN-GO" id="Q7L1Q6">
    <property type="GO annotations" value="1 GO annotation based on evolutionary models"/>
</dbReference>
<dbReference type="PhylomeDB" id="Q7L1Q6"/>
<dbReference type="TreeFam" id="TF324313"/>
<dbReference type="PathwayCommons" id="Q7L1Q6"/>
<dbReference type="SignaLink" id="Q7L1Q6"/>
<dbReference type="BioGRID-ORCS" id="9689">
    <property type="hits" value="35 hits in 1147 CRISPR screens"/>
</dbReference>
<dbReference type="CD-CODE" id="91857CE7">
    <property type="entry name" value="Nucleolus"/>
</dbReference>
<dbReference type="ChiTaRS" id="BZW1">
    <property type="organism name" value="human"/>
</dbReference>
<dbReference type="GeneWiki" id="BZW1"/>
<dbReference type="GenomeRNAi" id="9689"/>
<dbReference type="Pharos" id="Q7L1Q6">
    <property type="development level" value="Tbio"/>
</dbReference>
<dbReference type="PRO" id="PR:Q7L1Q6"/>
<dbReference type="Proteomes" id="UP000005640">
    <property type="component" value="Chromosome 2"/>
</dbReference>
<dbReference type="RNAct" id="Q7L1Q6">
    <property type="molecule type" value="protein"/>
</dbReference>
<dbReference type="Bgee" id="ENSG00000082153">
    <property type="expression patterns" value="Expressed in palpebral conjunctiva and 211 other cell types or tissues"/>
</dbReference>
<dbReference type="ExpressionAtlas" id="Q7L1Q6">
    <property type="expression patterns" value="baseline and differential"/>
</dbReference>
<dbReference type="GO" id="GO:0005737">
    <property type="term" value="C:cytoplasm"/>
    <property type="evidence" value="ECO:0000314"/>
    <property type="project" value="UniProtKB"/>
</dbReference>
<dbReference type="GO" id="GO:0016020">
    <property type="term" value="C:membrane"/>
    <property type="evidence" value="ECO:0007005"/>
    <property type="project" value="UniProtKB"/>
</dbReference>
<dbReference type="GO" id="GO:0045296">
    <property type="term" value="F:cadherin binding"/>
    <property type="evidence" value="ECO:0007005"/>
    <property type="project" value="BHF-UCL"/>
</dbReference>
<dbReference type="GO" id="GO:0003723">
    <property type="term" value="F:RNA binding"/>
    <property type="evidence" value="ECO:0007005"/>
    <property type="project" value="UniProtKB"/>
</dbReference>
<dbReference type="GO" id="GO:0006446">
    <property type="term" value="P:regulation of translational initiation"/>
    <property type="evidence" value="ECO:0000314"/>
    <property type="project" value="UniProtKB"/>
</dbReference>
<dbReference type="CDD" id="cd11560">
    <property type="entry name" value="W2_eIF5C_like"/>
    <property type="match status" value="1"/>
</dbReference>
<dbReference type="FunFam" id="1.25.40.180:FF:000006">
    <property type="entry name" value="Basic leucine zipper and W2 domain-containing protein 1"/>
    <property type="match status" value="1"/>
</dbReference>
<dbReference type="Gene3D" id="1.25.40.180">
    <property type="match status" value="1"/>
</dbReference>
<dbReference type="InterPro" id="IPR016024">
    <property type="entry name" value="ARM-type_fold"/>
</dbReference>
<dbReference type="InterPro" id="IPR051245">
    <property type="entry name" value="eIF5-mimic_regulator"/>
</dbReference>
<dbReference type="InterPro" id="IPR043510">
    <property type="entry name" value="W2_BZW1/2"/>
</dbReference>
<dbReference type="InterPro" id="IPR003307">
    <property type="entry name" value="W2_domain"/>
</dbReference>
<dbReference type="PANTHER" id="PTHR14208">
    <property type="entry name" value="BASIC LEUCINE ZIPPER AND W2 DOMAIN-CONTAINING PROTEIN"/>
    <property type="match status" value="1"/>
</dbReference>
<dbReference type="PANTHER" id="PTHR14208:SF0">
    <property type="entry name" value="EIF5-MIMIC PROTEIN 2"/>
    <property type="match status" value="1"/>
</dbReference>
<dbReference type="Pfam" id="PF25504">
    <property type="entry name" value="HEAT_5MP1_2"/>
    <property type="match status" value="1"/>
</dbReference>
<dbReference type="Pfam" id="PF02020">
    <property type="entry name" value="W2"/>
    <property type="match status" value="1"/>
</dbReference>
<dbReference type="SMART" id="SM00515">
    <property type="entry name" value="eIF5C"/>
    <property type="match status" value="1"/>
</dbReference>
<dbReference type="SUPFAM" id="SSF48371">
    <property type="entry name" value="ARM repeat"/>
    <property type="match status" value="1"/>
</dbReference>
<dbReference type="PROSITE" id="PS51363">
    <property type="entry name" value="W2"/>
    <property type="match status" value="1"/>
</dbReference>
<comment type="function">
    <text evidence="3 4 5">Translation initiation regulator which represses repeat-associated non-AUG (RAN) initiated translation probably by acting as a competitive inhibitor of eukaryotic translation initiation factor 5 (EIF5) function (PubMed:29470543, PubMed:34260931). Enhances histone H4 gene transcription but does not seem to bind DNA directly (PubMed:11524015).</text>
</comment>
<comment type="interaction">
    <interactant intactId="EBI-21557060">
        <id>Q7L1Q6-2</id>
    </interactant>
    <interactant intactId="EBI-356015">
        <id>Q14204</id>
        <label>DYNC1H1</label>
    </interactant>
    <organismsDiffer>false</organismsDiffer>
    <experiments>3</experiments>
</comment>
<comment type="interaction">
    <interactant intactId="EBI-21557060">
        <id>Q7L1Q6-2</id>
    </interactant>
    <interactant intactId="EBI-2432309">
        <id>Q92876</id>
        <label>KLK6</label>
    </interactant>
    <organismsDiffer>false</organismsDiffer>
    <experiments>3</experiments>
</comment>
<comment type="alternative products">
    <event type="alternative splicing"/>
    <isoform>
        <id>Q7L1Q6-1</id>
        <name>1</name>
        <sequence type="displayed"/>
    </isoform>
    <isoform>
        <id>Q7L1Q6-2</id>
        <name>2</name>
        <sequence type="described" ref="VSP_021266"/>
    </isoform>
    <isoform>
        <id>Q7L1Q6-3</id>
        <name>3</name>
        <sequence type="described" ref="VSP_043568"/>
    </isoform>
    <isoform>
        <id>Q7L1Q6-4</id>
        <name>4</name>
        <sequence type="described" ref="VSP_043569"/>
    </isoform>
</comment>
<comment type="developmental stage">
    <text evidence="3">Expressed in day 3 embryo.</text>
</comment>
<comment type="similarity">
    <text evidence="9">Belongs to the BZW family.</text>
</comment>
<comment type="sequence caution" evidence="9">
    <conflict type="erroneous initiation">
        <sequence resource="EMBL-CDS" id="BAA02795"/>
    </conflict>
</comment>
<proteinExistence type="evidence at protein level"/>
<protein>
    <recommendedName>
        <fullName evidence="8">eIF5-mimic protein 2</fullName>
    </recommendedName>
    <alternativeName>
        <fullName>Basic leucine zipper and W2 domain-containing protein 1</fullName>
    </alternativeName>
    <alternativeName>
        <fullName>Protein Orf</fullName>
    </alternativeName>
</protein>
<reference key="1">
    <citation type="journal article" date="1994" name="DNA Res.">
        <title>Prediction of the coding sequences of unidentified human genes. I. The coding sequences of 40 new genes (KIAA0001-KIAA0040) deduced by analysis of randomly sampled cDNA clones from human immature myeloid cell line KG-1.</title>
        <authorList>
            <person name="Nomura N."/>
            <person name="Miyajima N."/>
            <person name="Sazuka T."/>
            <person name="Tanaka A."/>
            <person name="Kawarabayasi Y."/>
            <person name="Sato S."/>
            <person name="Nagase T."/>
            <person name="Seki N."/>
            <person name="Ishikawa K."/>
            <person name="Tabata S."/>
        </authorList>
    </citation>
    <scope>NUCLEOTIDE SEQUENCE [LARGE SCALE MRNA] (ISOFORM 1)</scope>
    <source>
        <tissue>Bone marrow</tissue>
    </source>
</reference>
<reference key="2">
    <citation type="journal article" date="2004" name="Nat. Genet.">
        <title>Complete sequencing and characterization of 21,243 full-length human cDNAs.</title>
        <authorList>
            <person name="Ota T."/>
            <person name="Suzuki Y."/>
            <person name="Nishikawa T."/>
            <person name="Otsuki T."/>
            <person name="Sugiyama T."/>
            <person name="Irie R."/>
            <person name="Wakamatsu A."/>
            <person name="Hayashi K."/>
            <person name="Sato H."/>
            <person name="Nagai K."/>
            <person name="Kimura K."/>
            <person name="Makita H."/>
            <person name="Sekine M."/>
            <person name="Obayashi M."/>
            <person name="Nishi T."/>
            <person name="Shibahara T."/>
            <person name="Tanaka T."/>
            <person name="Ishii S."/>
            <person name="Yamamoto J."/>
            <person name="Saito K."/>
            <person name="Kawai Y."/>
            <person name="Isono Y."/>
            <person name="Nakamura Y."/>
            <person name="Nagahari K."/>
            <person name="Murakami K."/>
            <person name="Yasuda T."/>
            <person name="Iwayanagi T."/>
            <person name="Wagatsuma M."/>
            <person name="Shiratori A."/>
            <person name="Sudo H."/>
            <person name="Hosoiri T."/>
            <person name="Kaku Y."/>
            <person name="Kodaira H."/>
            <person name="Kondo H."/>
            <person name="Sugawara M."/>
            <person name="Takahashi M."/>
            <person name="Kanda K."/>
            <person name="Yokoi T."/>
            <person name="Furuya T."/>
            <person name="Kikkawa E."/>
            <person name="Omura Y."/>
            <person name="Abe K."/>
            <person name="Kamihara K."/>
            <person name="Katsuta N."/>
            <person name="Sato K."/>
            <person name="Tanikawa M."/>
            <person name="Yamazaki M."/>
            <person name="Ninomiya K."/>
            <person name="Ishibashi T."/>
            <person name="Yamashita H."/>
            <person name="Murakawa K."/>
            <person name="Fujimori K."/>
            <person name="Tanai H."/>
            <person name="Kimata M."/>
            <person name="Watanabe M."/>
            <person name="Hiraoka S."/>
            <person name="Chiba Y."/>
            <person name="Ishida S."/>
            <person name="Ono Y."/>
            <person name="Takiguchi S."/>
            <person name="Watanabe S."/>
            <person name="Yosida M."/>
            <person name="Hotuta T."/>
            <person name="Kusano J."/>
            <person name="Kanehori K."/>
            <person name="Takahashi-Fujii A."/>
            <person name="Hara H."/>
            <person name="Tanase T.-O."/>
            <person name="Nomura Y."/>
            <person name="Togiya S."/>
            <person name="Komai F."/>
            <person name="Hara R."/>
            <person name="Takeuchi K."/>
            <person name="Arita M."/>
            <person name="Imose N."/>
            <person name="Musashino K."/>
            <person name="Yuuki H."/>
            <person name="Oshima A."/>
            <person name="Sasaki N."/>
            <person name="Aotsuka S."/>
            <person name="Yoshikawa Y."/>
            <person name="Matsunawa H."/>
            <person name="Ichihara T."/>
            <person name="Shiohata N."/>
            <person name="Sano S."/>
            <person name="Moriya S."/>
            <person name="Momiyama H."/>
            <person name="Satoh N."/>
            <person name="Takami S."/>
            <person name="Terashima Y."/>
            <person name="Suzuki O."/>
            <person name="Nakagawa S."/>
            <person name="Senoh A."/>
            <person name="Mizoguchi H."/>
            <person name="Goto Y."/>
            <person name="Shimizu F."/>
            <person name="Wakebe H."/>
            <person name="Hishigaki H."/>
            <person name="Watanabe T."/>
            <person name="Sugiyama A."/>
            <person name="Takemoto M."/>
            <person name="Kawakami B."/>
            <person name="Yamazaki M."/>
            <person name="Watanabe K."/>
            <person name="Kumagai A."/>
            <person name="Itakura S."/>
            <person name="Fukuzumi Y."/>
            <person name="Fujimori Y."/>
            <person name="Komiyama M."/>
            <person name="Tashiro H."/>
            <person name="Tanigami A."/>
            <person name="Fujiwara T."/>
            <person name="Ono T."/>
            <person name="Yamada K."/>
            <person name="Fujii Y."/>
            <person name="Ozaki K."/>
            <person name="Hirao M."/>
            <person name="Ohmori Y."/>
            <person name="Kawabata A."/>
            <person name="Hikiji T."/>
            <person name="Kobatake N."/>
            <person name="Inagaki H."/>
            <person name="Ikema Y."/>
            <person name="Okamoto S."/>
            <person name="Okitani R."/>
            <person name="Kawakami T."/>
            <person name="Noguchi S."/>
            <person name="Itoh T."/>
            <person name="Shigeta K."/>
            <person name="Senba T."/>
            <person name="Matsumura K."/>
            <person name="Nakajima Y."/>
            <person name="Mizuno T."/>
            <person name="Morinaga M."/>
            <person name="Sasaki M."/>
            <person name="Togashi T."/>
            <person name="Oyama M."/>
            <person name="Hata H."/>
            <person name="Watanabe M."/>
            <person name="Komatsu T."/>
            <person name="Mizushima-Sugano J."/>
            <person name="Satoh T."/>
            <person name="Shirai Y."/>
            <person name="Takahashi Y."/>
            <person name="Nakagawa K."/>
            <person name="Okumura K."/>
            <person name="Nagase T."/>
            <person name="Nomura N."/>
            <person name="Kikuchi H."/>
            <person name="Masuho Y."/>
            <person name="Yamashita R."/>
            <person name="Nakai K."/>
            <person name="Yada T."/>
            <person name="Nakamura Y."/>
            <person name="Ohara O."/>
            <person name="Isogai T."/>
            <person name="Sugano S."/>
        </authorList>
    </citation>
    <scope>NUCLEOTIDE SEQUENCE [LARGE SCALE MRNA] (ISOFORMS 3 AND 4)</scope>
    <source>
        <tissue>Brain</tissue>
        <tissue>Synovium</tissue>
    </source>
</reference>
<reference key="3">
    <citation type="journal article" date="2005" name="Nature">
        <title>Generation and annotation of the DNA sequences of human chromosomes 2 and 4.</title>
        <authorList>
            <person name="Hillier L.W."/>
            <person name="Graves T.A."/>
            <person name="Fulton R.S."/>
            <person name="Fulton L.A."/>
            <person name="Pepin K.H."/>
            <person name="Minx P."/>
            <person name="Wagner-McPherson C."/>
            <person name="Layman D."/>
            <person name="Wylie K."/>
            <person name="Sekhon M."/>
            <person name="Becker M.C."/>
            <person name="Fewell G.A."/>
            <person name="Delehaunty K.D."/>
            <person name="Miner T.L."/>
            <person name="Nash W.E."/>
            <person name="Kremitzki C."/>
            <person name="Oddy L."/>
            <person name="Du H."/>
            <person name="Sun H."/>
            <person name="Bradshaw-Cordum H."/>
            <person name="Ali J."/>
            <person name="Carter J."/>
            <person name="Cordes M."/>
            <person name="Harris A."/>
            <person name="Isak A."/>
            <person name="van Brunt A."/>
            <person name="Nguyen C."/>
            <person name="Du F."/>
            <person name="Courtney L."/>
            <person name="Kalicki J."/>
            <person name="Ozersky P."/>
            <person name="Abbott S."/>
            <person name="Armstrong J."/>
            <person name="Belter E.A."/>
            <person name="Caruso L."/>
            <person name="Cedroni M."/>
            <person name="Cotton M."/>
            <person name="Davidson T."/>
            <person name="Desai A."/>
            <person name="Elliott G."/>
            <person name="Erb T."/>
            <person name="Fronick C."/>
            <person name="Gaige T."/>
            <person name="Haakenson W."/>
            <person name="Haglund K."/>
            <person name="Holmes A."/>
            <person name="Harkins R."/>
            <person name="Kim K."/>
            <person name="Kruchowski S.S."/>
            <person name="Strong C.M."/>
            <person name="Grewal N."/>
            <person name="Goyea E."/>
            <person name="Hou S."/>
            <person name="Levy A."/>
            <person name="Martinka S."/>
            <person name="Mead K."/>
            <person name="McLellan M.D."/>
            <person name="Meyer R."/>
            <person name="Randall-Maher J."/>
            <person name="Tomlinson C."/>
            <person name="Dauphin-Kohlberg S."/>
            <person name="Kozlowicz-Reilly A."/>
            <person name="Shah N."/>
            <person name="Swearengen-Shahid S."/>
            <person name="Snider J."/>
            <person name="Strong J.T."/>
            <person name="Thompson J."/>
            <person name="Yoakum M."/>
            <person name="Leonard S."/>
            <person name="Pearman C."/>
            <person name="Trani L."/>
            <person name="Radionenko M."/>
            <person name="Waligorski J.E."/>
            <person name="Wang C."/>
            <person name="Rock S.M."/>
            <person name="Tin-Wollam A.-M."/>
            <person name="Maupin R."/>
            <person name="Latreille P."/>
            <person name="Wendl M.C."/>
            <person name="Yang S.-P."/>
            <person name="Pohl C."/>
            <person name="Wallis J.W."/>
            <person name="Spieth J."/>
            <person name="Bieri T.A."/>
            <person name="Berkowicz N."/>
            <person name="Nelson J.O."/>
            <person name="Osborne J."/>
            <person name="Ding L."/>
            <person name="Meyer R."/>
            <person name="Sabo A."/>
            <person name="Shotland Y."/>
            <person name="Sinha P."/>
            <person name="Wohldmann P.E."/>
            <person name="Cook L.L."/>
            <person name="Hickenbotham M.T."/>
            <person name="Eldred J."/>
            <person name="Williams D."/>
            <person name="Jones T.A."/>
            <person name="She X."/>
            <person name="Ciccarelli F.D."/>
            <person name="Izaurralde E."/>
            <person name="Taylor J."/>
            <person name="Schmutz J."/>
            <person name="Myers R.M."/>
            <person name="Cox D.R."/>
            <person name="Huang X."/>
            <person name="McPherson J.D."/>
            <person name="Mardis E.R."/>
            <person name="Clifton S.W."/>
            <person name="Warren W.C."/>
            <person name="Chinwalla A.T."/>
            <person name="Eddy S.R."/>
            <person name="Marra M.A."/>
            <person name="Ovcharenko I."/>
            <person name="Furey T.S."/>
            <person name="Miller W."/>
            <person name="Eichler E.E."/>
            <person name="Bork P."/>
            <person name="Suyama M."/>
            <person name="Torrents D."/>
            <person name="Waterston R.H."/>
            <person name="Wilson R.K."/>
        </authorList>
    </citation>
    <scope>NUCLEOTIDE SEQUENCE [LARGE SCALE GENOMIC DNA]</scope>
</reference>
<reference key="4">
    <citation type="journal article" date="2004" name="Genome Res.">
        <title>The status, quality, and expansion of the NIH full-length cDNA project: the Mammalian Gene Collection (MGC).</title>
        <authorList>
            <consortium name="The MGC Project Team"/>
        </authorList>
    </citation>
    <scope>NUCLEOTIDE SEQUENCE [LARGE SCALE MRNA] (ISOFORMS 1 AND 2)</scope>
    <source>
        <tissue>Brain</tissue>
        <tissue>Eye</tissue>
    </source>
</reference>
<reference key="5">
    <citation type="submission" date="1996-03" db="EMBL/GenBank/DDBJ databases">
        <title>Characterization of different mRNA types expressed in human brain.</title>
        <authorList>
            <person name="Dmitrenko V.V."/>
            <person name="Garifulin O.M."/>
            <person name="Kavsan V.M."/>
        </authorList>
    </citation>
    <scope>NUCLEOTIDE SEQUENCE [MRNA] OF 1-74</scope>
    <source>
        <tissue>Fetal brain</tissue>
    </source>
</reference>
<reference key="6">
    <citation type="journal article" date="2001" name="Biochemistry">
        <title>Purification and functional analysis of a novel leucine-zipper/nucleotide-fold protein, BZAP45, stimulating cell cycle regulated histone H4 gene transcription.</title>
        <authorList>
            <person name="Mitra P."/>
            <person name="Vaughan P.S."/>
            <person name="Stein J.L."/>
            <person name="Stein G.S."/>
            <person name="van Wijnen A.J."/>
        </authorList>
    </citation>
    <scope>PROTEIN SEQUENCE OF 6-15</scope>
    <scope>DEVELOPMENTAL STAGE</scope>
    <scope>FUNCTION</scope>
</reference>
<reference key="7">
    <citation type="journal article" date="2006" name="Cell">
        <title>Global, in vivo, and site-specific phosphorylation dynamics in signaling networks.</title>
        <authorList>
            <person name="Olsen J.V."/>
            <person name="Blagoev B."/>
            <person name="Gnad F."/>
            <person name="Macek B."/>
            <person name="Kumar C."/>
            <person name="Mortensen P."/>
            <person name="Mann M."/>
        </authorList>
    </citation>
    <scope>PHOSPHORYLATION [LARGE SCALE ANALYSIS] AT SER-411 AND SER-413</scope>
    <scope>IDENTIFICATION BY MASS SPECTROMETRY [LARGE SCALE ANALYSIS]</scope>
    <source>
        <tissue>Cervix carcinoma</tissue>
    </source>
</reference>
<reference key="8">
    <citation type="journal article" date="2006" name="Nat. Biotechnol.">
        <title>A probability-based approach for high-throughput protein phosphorylation analysis and site localization.</title>
        <authorList>
            <person name="Beausoleil S.A."/>
            <person name="Villen J."/>
            <person name="Gerber S.A."/>
            <person name="Rush J."/>
            <person name="Gygi S.P."/>
        </authorList>
    </citation>
    <scope>PHOSPHORYLATION [LARGE SCALE ANALYSIS] AT SER-411</scope>
    <scope>IDENTIFICATION BY MASS SPECTROMETRY [LARGE SCALE ANALYSIS]</scope>
    <source>
        <tissue>Cervix carcinoma</tissue>
    </source>
</reference>
<reference key="9">
    <citation type="journal article" date="2008" name="Proc. Natl. Acad. Sci. U.S.A.">
        <title>A quantitative atlas of mitotic phosphorylation.</title>
        <authorList>
            <person name="Dephoure N."/>
            <person name="Zhou C."/>
            <person name="Villen J."/>
            <person name="Beausoleil S.A."/>
            <person name="Bakalarski C.E."/>
            <person name="Elledge S.J."/>
            <person name="Gygi S.P."/>
        </authorList>
    </citation>
    <scope>IDENTIFICATION BY MASS SPECTROMETRY [LARGE SCALE ANALYSIS]</scope>
    <source>
        <tissue>Cervix carcinoma</tissue>
    </source>
</reference>
<reference key="10">
    <citation type="journal article" date="2008" name="Proteomics">
        <title>Large-scale phosphoproteome analysis of human liver tissue by enrichment and fractionation of phosphopeptides with strong anion exchange chromatography.</title>
        <authorList>
            <person name="Han G."/>
            <person name="Ye M."/>
            <person name="Zhou H."/>
            <person name="Jiang X."/>
            <person name="Feng S."/>
            <person name="Jiang X."/>
            <person name="Tian R."/>
            <person name="Wan D."/>
            <person name="Zou H."/>
            <person name="Gu J."/>
        </authorList>
    </citation>
    <scope>PHOSPHORYLATION [LARGE SCALE ANALYSIS] AT SER-411 AND SER-413</scope>
    <scope>IDENTIFICATION BY MASS SPECTROMETRY [LARGE SCALE ANALYSIS]</scope>
    <source>
        <tissue>Liver</tissue>
    </source>
</reference>
<reference key="11">
    <citation type="journal article" date="2009" name="Anal. Chem.">
        <title>Lys-N and trypsin cover complementary parts of the phosphoproteome in a refined SCX-based approach.</title>
        <authorList>
            <person name="Gauci S."/>
            <person name="Helbig A.O."/>
            <person name="Slijper M."/>
            <person name="Krijgsveld J."/>
            <person name="Heck A.J."/>
            <person name="Mohammed S."/>
        </authorList>
    </citation>
    <scope>IDENTIFICATION BY MASS SPECTROMETRY [LARGE SCALE ANALYSIS]</scope>
</reference>
<reference key="12">
    <citation type="journal article" date="2009" name="Sci. Signal.">
        <title>Quantitative phosphoproteomic analysis of T cell receptor signaling reveals system-wide modulation of protein-protein interactions.</title>
        <authorList>
            <person name="Mayya V."/>
            <person name="Lundgren D.H."/>
            <person name="Hwang S.-I."/>
            <person name="Rezaul K."/>
            <person name="Wu L."/>
            <person name="Eng J.K."/>
            <person name="Rodionov V."/>
            <person name="Han D.K."/>
        </authorList>
    </citation>
    <scope>PHOSPHORYLATION [LARGE SCALE ANALYSIS] AT SER-411</scope>
    <scope>IDENTIFICATION BY MASS SPECTROMETRY [LARGE SCALE ANALYSIS]</scope>
    <source>
        <tissue>Leukemic T-cell</tissue>
    </source>
</reference>
<reference key="13">
    <citation type="journal article" date="2010" name="Sci. Signal.">
        <title>Quantitative phosphoproteomics reveals widespread full phosphorylation site occupancy during mitosis.</title>
        <authorList>
            <person name="Olsen J.V."/>
            <person name="Vermeulen M."/>
            <person name="Santamaria A."/>
            <person name="Kumar C."/>
            <person name="Miller M.L."/>
            <person name="Jensen L.J."/>
            <person name="Gnad F."/>
            <person name="Cox J."/>
            <person name="Jensen T.S."/>
            <person name="Nigg E.A."/>
            <person name="Brunak S."/>
            <person name="Mann M."/>
        </authorList>
    </citation>
    <scope>PHOSPHORYLATION [LARGE SCALE ANALYSIS] AT SER-411</scope>
    <scope>IDENTIFICATION BY MASS SPECTROMETRY [LARGE SCALE ANALYSIS]</scope>
    <source>
        <tissue>Cervix carcinoma</tissue>
    </source>
</reference>
<reference key="14">
    <citation type="journal article" date="2011" name="BMC Syst. Biol.">
        <title>Initial characterization of the human central proteome.</title>
        <authorList>
            <person name="Burkard T.R."/>
            <person name="Planyavsky M."/>
            <person name="Kaupe I."/>
            <person name="Breitwieser F.P."/>
            <person name="Buerckstuemmer T."/>
            <person name="Bennett K.L."/>
            <person name="Superti-Furga G."/>
            <person name="Colinge J."/>
        </authorList>
    </citation>
    <scope>IDENTIFICATION BY MASS SPECTROMETRY [LARGE SCALE ANALYSIS]</scope>
</reference>
<reference key="15">
    <citation type="journal article" date="2011" name="Nucleic Acids Res.">
        <title>Mechanisms of translational regulation by a human eIF5-mimic protein.</title>
        <authorList>
            <person name="Singh C.R."/>
            <person name="Watanabe R."/>
            <person name="Zhou D."/>
            <person name="Jennings M.D."/>
            <person name="Fukao A."/>
            <person name="Lee B."/>
            <person name="Ikeda Y."/>
            <person name="Chiorini J.A."/>
            <person name="Campbell S.G."/>
            <person name="Ashe M.P."/>
            <person name="Fujiwara T."/>
            <person name="Wek R.C."/>
            <person name="Pavitt G.D."/>
            <person name="Asano K."/>
        </authorList>
    </citation>
    <scope>NOMENCLATURE</scope>
</reference>
<reference key="16">
    <citation type="journal article" date="2011" name="Sci. Signal.">
        <title>System-wide temporal characterization of the proteome and phosphoproteome of human embryonic stem cell differentiation.</title>
        <authorList>
            <person name="Rigbolt K.T."/>
            <person name="Prokhorova T.A."/>
            <person name="Akimov V."/>
            <person name="Henningsen J."/>
            <person name="Johansen P.T."/>
            <person name="Kratchmarova I."/>
            <person name="Kassem M."/>
            <person name="Mann M."/>
            <person name="Olsen J.V."/>
            <person name="Blagoev B."/>
        </authorList>
    </citation>
    <scope>PHOSPHORYLATION [LARGE SCALE ANALYSIS] AT SER-411</scope>
    <scope>IDENTIFICATION BY MASS SPECTROMETRY [LARGE SCALE ANALYSIS]</scope>
</reference>
<reference key="17">
    <citation type="journal article" date="2012" name="Proc. Natl. Acad. Sci. U.S.A.">
        <title>N-terminal acetylome analyses and functional insights of the N-terminal acetyltransferase NatB.</title>
        <authorList>
            <person name="Van Damme P."/>
            <person name="Lasa M."/>
            <person name="Polevoda B."/>
            <person name="Gazquez C."/>
            <person name="Elosegui-Artola A."/>
            <person name="Kim D.S."/>
            <person name="De Juan-Pardo E."/>
            <person name="Demeyer K."/>
            <person name="Hole K."/>
            <person name="Larrea E."/>
            <person name="Timmerman E."/>
            <person name="Prieto J."/>
            <person name="Arnesen T."/>
            <person name="Sherman F."/>
            <person name="Gevaert K."/>
            <person name="Aldabe R."/>
        </authorList>
    </citation>
    <scope>ACETYLATION [LARGE SCALE ANALYSIS] AT MET-1</scope>
    <scope>IDENTIFICATION BY MASS SPECTROMETRY [LARGE SCALE ANALYSIS]</scope>
</reference>
<reference key="18">
    <citation type="journal article" date="2013" name="J. Proteome Res.">
        <title>Toward a comprehensive characterization of a human cancer cell phosphoproteome.</title>
        <authorList>
            <person name="Zhou H."/>
            <person name="Di Palma S."/>
            <person name="Preisinger C."/>
            <person name="Peng M."/>
            <person name="Polat A.N."/>
            <person name="Heck A.J."/>
            <person name="Mohammed S."/>
        </authorList>
    </citation>
    <scope>PHOSPHORYLATION [LARGE SCALE ANALYSIS] AT SER-12</scope>
    <scope>IDENTIFICATION BY MASS SPECTROMETRY [LARGE SCALE ANALYSIS]</scope>
    <source>
        <tissue>Cervix carcinoma</tissue>
    </source>
</reference>
<reference key="19">
    <citation type="journal article" date="2014" name="J. Proteomics">
        <title>An enzyme assisted RP-RPLC approach for in-depth analysis of human liver phosphoproteome.</title>
        <authorList>
            <person name="Bian Y."/>
            <person name="Song C."/>
            <person name="Cheng K."/>
            <person name="Dong M."/>
            <person name="Wang F."/>
            <person name="Huang J."/>
            <person name="Sun D."/>
            <person name="Wang L."/>
            <person name="Ye M."/>
            <person name="Zou H."/>
        </authorList>
    </citation>
    <scope>IDENTIFICATION BY MASS SPECTROMETRY [LARGE SCALE ANALYSIS]</scope>
    <source>
        <tissue>Liver</tissue>
    </source>
</reference>
<reference key="20">
    <citation type="journal article" date="2017" name="Nat. Struct. Mol. Biol.">
        <title>Site-specific mapping of the human SUMO proteome reveals co-modification with phosphorylation.</title>
        <authorList>
            <person name="Hendriks I.A."/>
            <person name="Lyon D."/>
            <person name="Young C."/>
            <person name="Jensen L.J."/>
            <person name="Vertegaal A.C."/>
            <person name="Nielsen M.L."/>
        </authorList>
    </citation>
    <scope>SUMOYLATION [LARGE SCALE ANALYSIS] AT LYS-368</scope>
    <scope>IDENTIFICATION BY MASS SPECTROMETRY [LARGE SCALE ANALYSIS]</scope>
</reference>
<reference key="21">
    <citation type="journal article" date="2018" name="PLoS ONE">
        <title>Translational autoregulation of BZW1 and BZW2 expression by modulating the stringency of start codon selection.</title>
        <authorList>
            <person name="Loughran G."/>
            <person name="Firth A.E."/>
            <person name="Atkins J.F."/>
            <person name="Ivanov I.P."/>
        </authorList>
    </citation>
    <scope>FUNCTION</scope>
</reference>
<reference key="22">
    <citation type="journal article" date="2021" name="Cell Rep.">
        <title>Human oncoprotein 5MP suppresses general and repeat-associated non-AUG translation via eIF3 by a common mechanism.</title>
        <authorList>
            <person name="Singh C.R."/>
            <person name="Glineburg M.R."/>
            <person name="Moore C."/>
            <person name="Tani N."/>
            <person name="Jaiswal R."/>
            <person name="Zou Y."/>
            <person name="Aube E."/>
            <person name="Gillaspie S."/>
            <person name="Thornton M."/>
            <person name="Cecil A."/>
            <person name="Hilgers M."/>
            <person name="Takasu A."/>
            <person name="Asano I."/>
            <person name="Asano M."/>
            <person name="Escalante C.R."/>
            <person name="Nakamura A."/>
            <person name="Todd P.K."/>
            <person name="Asano K."/>
        </authorList>
    </citation>
    <scope>FUNCTION</scope>
</reference>
<sequence length="419" mass="48043">MNNQKQQKPTLSGQRFKTRKRDEKERFDPTQFQDCIIQGLTETGTDLEAVAKFLDASGAKLDYRRYAETLFDILVAGGMLAPGGTLADDMMRTDVCVFAAQEDLETMQAFAQVFNKLIRRYKYLEKGFEDEVKKLLLFLKGFSESERNKLAMLTGVLLANGTLNASILNSLYNENLVKEGVSAAFAVKLFKSWINEKDINAVAASLRKVSMDNRLMELFPANKQSVEHFTKYFTEAGLKELSEYVRNQQTIGARKELQKELQEQMSRGDPFKDIILYVKEEMKKNNIPEPVVIGIVWSSVMSTVEWNKKEELVAEQAIKHLKQYSPLLAAFTTQGQSELTLLLKIQEYCYDNIHFMKAFQKIVVLFYKAEVLSEEPILKWYKDAHVAKGKSVFLEQMKKFVEWLKNAEEESESEAEEGD</sequence>
<organism>
    <name type="scientific">Homo sapiens</name>
    <name type="common">Human</name>
    <dbReference type="NCBI Taxonomy" id="9606"/>
    <lineage>
        <taxon>Eukaryota</taxon>
        <taxon>Metazoa</taxon>
        <taxon>Chordata</taxon>
        <taxon>Craniata</taxon>
        <taxon>Vertebrata</taxon>
        <taxon>Euteleostomi</taxon>
        <taxon>Mammalia</taxon>
        <taxon>Eutheria</taxon>
        <taxon>Euarchontoglires</taxon>
        <taxon>Primates</taxon>
        <taxon>Haplorrhini</taxon>
        <taxon>Catarrhini</taxon>
        <taxon>Hominidae</taxon>
        <taxon>Homo</taxon>
    </lineage>
</organism>
<feature type="chain" id="PRO_0000254609" description="eIF5-mimic protein 2">
    <location>
        <begin position="1"/>
        <end position="419"/>
    </location>
</feature>
<feature type="domain" description="W2" evidence="1">
    <location>
        <begin position="247"/>
        <end position="414"/>
    </location>
</feature>
<feature type="region of interest" description="Disordered" evidence="2">
    <location>
        <begin position="1"/>
        <end position="26"/>
    </location>
</feature>
<feature type="compositionally biased region" description="Polar residues" evidence="2">
    <location>
        <begin position="1"/>
        <end position="15"/>
    </location>
</feature>
<feature type="modified residue" description="N-acetylmethionine" evidence="16">
    <location>
        <position position="1"/>
    </location>
</feature>
<feature type="modified residue" description="Phosphoserine" evidence="17">
    <location>
        <position position="12"/>
    </location>
</feature>
<feature type="modified residue" description="Phosphoserine" evidence="10 11 12 13 14 15">
    <location>
        <position position="411"/>
    </location>
</feature>
<feature type="modified residue" description="Phosphoserine" evidence="11 12">
    <location>
        <position position="413"/>
    </location>
</feature>
<feature type="cross-link" description="Glycyl lysine isopeptide (Lys-Gly) (interchain with G-Cter in SUMO2)" evidence="18">
    <location>
        <position position="368"/>
    </location>
</feature>
<feature type="splice variant" id="VSP_043568" description="In isoform 3." evidence="6">
    <original>M</original>
    <variation>MYGAPGAPAQSASVTVVRSLRRPPPQATGVSFM</variation>
    <location>
        <position position="1"/>
    </location>
</feature>
<feature type="splice variant" id="VSP_043569" description="In isoform 4." evidence="6">
    <original>M</original>
    <variation>MVSFM</variation>
    <location>
        <position position="1"/>
    </location>
</feature>
<feature type="splice variant" id="VSP_021266" description="In isoform 2." evidence="7">
    <location>
        <begin position="286"/>
        <end position="351"/>
    </location>
</feature>
<evidence type="ECO:0000255" key="1">
    <source>
        <dbReference type="PROSITE-ProRule" id="PRU00695"/>
    </source>
</evidence>
<evidence type="ECO:0000256" key="2">
    <source>
        <dbReference type="SAM" id="MobiDB-lite"/>
    </source>
</evidence>
<evidence type="ECO:0000269" key="3">
    <source>
    </source>
</evidence>
<evidence type="ECO:0000269" key="4">
    <source>
    </source>
</evidence>
<evidence type="ECO:0000269" key="5">
    <source>
    </source>
</evidence>
<evidence type="ECO:0000303" key="6">
    <source>
    </source>
</evidence>
<evidence type="ECO:0000303" key="7">
    <source>
    </source>
</evidence>
<evidence type="ECO:0000303" key="8">
    <source>
    </source>
</evidence>
<evidence type="ECO:0000305" key="9"/>
<evidence type="ECO:0007744" key="10">
    <source>
    </source>
</evidence>
<evidence type="ECO:0007744" key="11">
    <source>
    </source>
</evidence>
<evidence type="ECO:0007744" key="12">
    <source>
    </source>
</evidence>
<evidence type="ECO:0007744" key="13">
    <source>
    </source>
</evidence>
<evidence type="ECO:0007744" key="14">
    <source>
    </source>
</evidence>
<evidence type="ECO:0007744" key="15">
    <source>
    </source>
</evidence>
<evidence type="ECO:0007744" key="16">
    <source>
    </source>
</evidence>
<evidence type="ECO:0007744" key="17">
    <source>
    </source>
</evidence>
<evidence type="ECO:0007744" key="18">
    <source>
    </source>
</evidence>
<name>5MP2_HUMAN</name>